<comment type="function">
    <text evidence="1">3'-to-5' exoribonuclease specific for small oligoribonucleotides.</text>
</comment>
<comment type="subcellular location">
    <subcellularLocation>
        <location evidence="1">Cytoplasm</location>
    </subcellularLocation>
</comment>
<comment type="similarity">
    <text evidence="1">Belongs to the oligoribonuclease family.</text>
</comment>
<sequence>MEMTGLNPETDRIIEVAMIITDSDLNVLAQSEVYAIHQSDDLLDNMDEWNTATHGRTGLTQRVRESSHTEAEVEQKLLDFMSEWIPGRATPMCGNSIHQDRRFMVKYMPKLENYFHYRNLDVSTLKELAKRWNPPIAKSVVKRGSHKALDDILESIEEMRHYREHFLISAPKAEAQ</sequence>
<gene>
    <name evidence="1" type="primary">orn</name>
    <name type="ordered locus">NGO_0042</name>
</gene>
<proteinExistence type="inferred from homology"/>
<reference key="1">
    <citation type="submission" date="2003-03" db="EMBL/GenBank/DDBJ databases">
        <title>The complete genome sequence of Neisseria gonorrhoeae.</title>
        <authorList>
            <person name="Lewis L.A."/>
            <person name="Gillaspy A.F."/>
            <person name="McLaughlin R.E."/>
            <person name="Gipson M."/>
            <person name="Ducey T.F."/>
            <person name="Ownbey T."/>
            <person name="Hartman K."/>
            <person name="Nydick C."/>
            <person name="Carson M.B."/>
            <person name="Vaughn J."/>
            <person name="Thomson C."/>
            <person name="Song L."/>
            <person name="Lin S."/>
            <person name="Yuan X."/>
            <person name="Najar F."/>
            <person name="Zhan M."/>
            <person name="Ren Q."/>
            <person name="Zhu H."/>
            <person name="Qi S."/>
            <person name="Kenton S.M."/>
            <person name="Lai H."/>
            <person name="White J.D."/>
            <person name="Clifton S."/>
            <person name="Roe B.A."/>
            <person name="Dyer D.W."/>
        </authorList>
    </citation>
    <scope>NUCLEOTIDE SEQUENCE [LARGE SCALE GENOMIC DNA]</scope>
    <source>
        <strain>ATCC 700825 / FA 1090</strain>
    </source>
</reference>
<name>ORN_NEIG1</name>
<dbReference type="EC" id="3.1.15.-" evidence="1"/>
<dbReference type="EMBL" id="AE004969">
    <property type="protein sequence ID" value="AAW88809.2"/>
    <property type="molecule type" value="Genomic_DNA"/>
</dbReference>
<dbReference type="SMR" id="Q5FAH8"/>
<dbReference type="STRING" id="242231.NGO_0042"/>
<dbReference type="KEGG" id="ngo:NGO_0042"/>
<dbReference type="PATRIC" id="fig|242231.10.peg.46"/>
<dbReference type="HOGENOM" id="CLU_064761_2_0_4"/>
<dbReference type="Proteomes" id="UP000000535">
    <property type="component" value="Chromosome"/>
</dbReference>
<dbReference type="GO" id="GO:0005737">
    <property type="term" value="C:cytoplasm"/>
    <property type="evidence" value="ECO:0007669"/>
    <property type="project" value="UniProtKB-SubCell"/>
</dbReference>
<dbReference type="GO" id="GO:0000175">
    <property type="term" value="F:3'-5'-RNA exonuclease activity"/>
    <property type="evidence" value="ECO:0007669"/>
    <property type="project" value="InterPro"/>
</dbReference>
<dbReference type="GO" id="GO:0003676">
    <property type="term" value="F:nucleic acid binding"/>
    <property type="evidence" value="ECO:0007669"/>
    <property type="project" value="InterPro"/>
</dbReference>
<dbReference type="GO" id="GO:0006259">
    <property type="term" value="P:DNA metabolic process"/>
    <property type="evidence" value="ECO:0007669"/>
    <property type="project" value="UniProtKB-ARBA"/>
</dbReference>
<dbReference type="CDD" id="cd06135">
    <property type="entry name" value="Orn"/>
    <property type="match status" value="1"/>
</dbReference>
<dbReference type="FunFam" id="3.30.420.10:FF:000003">
    <property type="entry name" value="Oligoribonuclease"/>
    <property type="match status" value="1"/>
</dbReference>
<dbReference type="Gene3D" id="3.30.420.10">
    <property type="entry name" value="Ribonuclease H-like superfamily/Ribonuclease H"/>
    <property type="match status" value="1"/>
</dbReference>
<dbReference type="HAMAP" id="MF_00045">
    <property type="entry name" value="Oligoribonuclease"/>
    <property type="match status" value="1"/>
</dbReference>
<dbReference type="InterPro" id="IPR013520">
    <property type="entry name" value="Exonuclease_RNaseT/DNA_pol3"/>
</dbReference>
<dbReference type="InterPro" id="IPR022894">
    <property type="entry name" value="Oligoribonuclease"/>
</dbReference>
<dbReference type="InterPro" id="IPR012337">
    <property type="entry name" value="RNaseH-like_sf"/>
</dbReference>
<dbReference type="InterPro" id="IPR036397">
    <property type="entry name" value="RNaseH_sf"/>
</dbReference>
<dbReference type="NCBIfam" id="NF003765">
    <property type="entry name" value="PRK05359.1"/>
    <property type="match status" value="1"/>
</dbReference>
<dbReference type="PANTHER" id="PTHR11046">
    <property type="entry name" value="OLIGORIBONUCLEASE, MITOCHONDRIAL"/>
    <property type="match status" value="1"/>
</dbReference>
<dbReference type="PANTHER" id="PTHR11046:SF0">
    <property type="entry name" value="OLIGORIBONUCLEASE, MITOCHONDRIAL"/>
    <property type="match status" value="1"/>
</dbReference>
<dbReference type="Pfam" id="PF00929">
    <property type="entry name" value="RNase_T"/>
    <property type="match status" value="1"/>
</dbReference>
<dbReference type="SMART" id="SM00479">
    <property type="entry name" value="EXOIII"/>
    <property type="match status" value="1"/>
</dbReference>
<dbReference type="SUPFAM" id="SSF53098">
    <property type="entry name" value="Ribonuclease H-like"/>
    <property type="match status" value="1"/>
</dbReference>
<protein>
    <recommendedName>
        <fullName evidence="1">Oligoribonuclease</fullName>
        <ecNumber evidence="1">3.1.15.-</ecNumber>
    </recommendedName>
</protein>
<feature type="chain" id="PRO_0000111052" description="Oligoribonuclease">
    <location>
        <begin position="1"/>
        <end position="176"/>
    </location>
</feature>
<feature type="domain" description="Exonuclease" evidence="1">
    <location>
        <begin position="2"/>
        <end position="159"/>
    </location>
</feature>
<feature type="active site" evidence="1">
    <location>
        <position position="117"/>
    </location>
</feature>
<accession>Q5FAH8</accession>
<keyword id="KW-0963">Cytoplasm</keyword>
<keyword id="KW-0269">Exonuclease</keyword>
<keyword id="KW-0378">Hydrolase</keyword>
<keyword id="KW-0540">Nuclease</keyword>
<keyword id="KW-1185">Reference proteome</keyword>
<organism>
    <name type="scientific">Neisseria gonorrhoeae (strain ATCC 700825 / FA 1090)</name>
    <dbReference type="NCBI Taxonomy" id="242231"/>
    <lineage>
        <taxon>Bacteria</taxon>
        <taxon>Pseudomonadati</taxon>
        <taxon>Pseudomonadota</taxon>
        <taxon>Betaproteobacteria</taxon>
        <taxon>Neisseriales</taxon>
        <taxon>Neisseriaceae</taxon>
        <taxon>Neisseria</taxon>
    </lineage>
</organism>
<evidence type="ECO:0000255" key="1">
    <source>
        <dbReference type="HAMAP-Rule" id="MF_00045"/>
    </source>
</evidence>